<organism>
    <name type="scientific">Pseudomonas putida</name>
    <name type="common">Arthrobacter siderocapsulatus</name>
    <dbReference type="NCBI Taxonomy" id="303"/>
    <lineage>
        <taxon>Bacteria</taxon>
        <taxon>Pseudomonadati</taxon>
        <taxon>Pseudomonadota</taxon>
        <taxon>Gammaproteobacteria</taxon>
        <taxon>Pseudomonadales</taxon>
        <taxon>Pseudomonadaceae</taxon>
        <taxon>Pseudomonas</taxon>
    </lineage>
</organism>
<feature type="chain" id="PRO_0000160950" description="Imidazolonepropionase">
    <location>
        <begin position="1"/>
        <end position="401"/>
    </location>
</feature>
<feature type="binding site" evidence="1">
    <location>
        <position position="66"/>
    </location>
    <ligand>
        <name>Fe(3+)</name>
        <dbReference type="ChEBI" id="CHEBI:29034"/>
    </ligand>
</feature>
<feature type="binding site" evidence="1">
    <location>
        <position position="66"/>
    </location>
    <ligand>
        <name>Zn(2+)</name>
        <dbReference type="ChEBI" id="CHEBI:29105"/>
    </ligand>
</feature>
<feature type="binding site" evidence="1">
    <location>
        <position position="68"/>
    </location>
    <ligand>
        <name>Fe(3+)</name>
        <dbReference type="ChEBI" id="CHEBI:29034"/>
    </ligand>
</feature>
<feature type="binding site" evidence="1">
    <location>
        <position position="68"/>
    </location>
    <ligand>
        <name>Zn(2+)</name>
        <dbReference type="ChEBI" id="CHEBI:29105"/>
    </ligand>
</feature>
<feature type="binding site" evidence="1">
    <location>
        <position position="75"/>
    </location>
    <ligand>
        <name>4-imidazolone-5-propanoate</name>
        <dbReference type="ChEBI" id="CHEBI:77893"/>
    </ligand>
</feature>
<feature type="binding site" evidence="1">
    <location>
        <position position="138"/>
    </location>
    <ligand>
        <name>4-imidazolone-5-propanoate</name>
        <dbReference type="ChEBI" id="CHEBI:77893"/>
    </ligand>
</feature>
<feature type="binding site" evidence="1">
    <location>
        <position position="138"/>
    </location>
    <ligand>
        <name>N-formimidoyl-L-glutamate</name>
        <dbReference type="ChEBI" id="CHEBI:58928"/>
    </ligand>
</feature>
<feature type="binding site" evidence="1">
    <location>
        <position position="171"/>
    </location>
    <ligand>
        <name>4-imidazolone-5-propanoate</name>
        <dbReference type="ChEBI" id="CHEBI:77893"/>
    </ligand>
</feature>
<feature type="binding site" evidence="1">
    <location>
        <position position="236"/>
    </location>
    <ligand>
        <name>Fe(3+)</name>
        <dbReference type="ChEBI" id="CHEBI:29034"/>
    </ligand>
</feature>
<feature type="binding site" evidence="1">
    <location>
        <position position="236"/>
    </location>
    <ligand>
        <name>Zn(2+)</name>
        <dbReference type="ChEBI" id="CHEBI:29105"/>
    </ligand>
</feature>
<feature type="binding site" evidence="1">
    <location>
        <position position="239"/>
    </location>
    <ligand>
        <name>4-imidazolone-5-propanoate</name>
        <dbReference type="ChEBI" id="CHEBI:77893"/>
    </ligand>
</feature>
<feature type="binding site" evidence="1">
    <location>
        <position position="311"/>
    </location>
    <ligand>
        <name>Fe(3+)</name>
        <dbReference type="ChEBI" id="CHEBI:29034"/>
    </ligand>
</feature>
<feature type="binding site" evidence="1">
    <location>
        <position position="311"/>
    </location>
    <ligand>
        <name>Zn(2+)</name>
        <dbReference type="ChEBI" id="CHEBI:29105"/>
    </ligand>
</feature>
<feature type="binding site" evidence="1">
    <location>
        <position position="313"/>
    </location>
    <ligand>
        <name>N-formimidoyl-L-glutamate</name>
        <dbReference type="ChEBI" id="CHEBI:58928"/>
    </ligand>
</feature>
<feature type="binding site" evidence="1">
    <location>
        <position position="315"/>
    </location>
    <ligand>
        <name>N-formimidoyl-L-glutamate</name>
        <dbReference type="ChEBI" id="CHEBI:58928"/>
    </ligand>
</feature>
<feature type="binding site" evidence="1">
    <location>
        <position position="316"/>
    </location>
    <ligand>
        <name>4-imidazolone-5-propanoate</name>
        <dbReference type="ChEBI" id="CHEBI:77893"/>
    </ligand>
</feature>
<reference key="1">
    <citation type="submission" date="1997-11" db="EMBL/GenBank/DDBJ databases">
        <authorList>
            <person name="Phillips A.T."/>
            <person name="Baker C.S."/>
        </authorList>
    </citation>
    <scope>NUCLEOTIDE SEQUENCE [GENOMIC DNA]</scope>
    <source>
        <strain>ATCC 12633 / DSM 291 / JCM 13063 / CCUG 12690 / LMG 2257 / NBRC 14164 / NCIMB 9494 / NCTC 10936 / VKM B-2187 / Stanier 90</strain>
    </source>
</reference>
<reference key="2">
    <citation type="unpublished observations" date="2001-05">
        <authorList>
            <person name="Haft D."/>
        </authorList>
    </citation>
    <scope>IDENTIFICATION OF PROBABLE FRAMESHIFTS</scope>
</reference>
<sequence length="401" mass="42993">MRTVWQHCHVATMAEGRYSAIEDAAIVTSAGLIEWIGPRAELAPVDADRTVDLGGAWITPGLIDCHTHAVFGGNRSGEFEQRLQGVSYAEIAAQGGGIASTVRATRAASEDELFASARQRVQALMRDGVTTLEIKSGYGLDLANERKMLRVARRLADELPLAVRATCLAAHALPPEYAGRADDYIAHICDEMLPALAAEGLVDAVDAFCEHLAFSPAQVERLFIKARELGLPVKLHAEQLSSLHGSSLAARYQALSADHLEFMTEEDAIAMAAAGTVAVLLPGAFYFLRETQLPPMDALRRHGVKIALASDLNPGTSPGLSLRLMLNMGCTCFRMTPEEALAGVTVHAATALGLGDSHGSLEVGKVADFVAWQIERPADLAYWLGGDLPKRVVRKGHEISN</sequence>
<keyword id="KW-0963">Cytoplasm</keyword>
<keyword id="KW-0369">Histidine metabolism</keyword>
<keyword id="KW-0378">Hydrolase</keyword>
<keyword id="KW-0408">Iron</keyword>
<keyword id="KW-0479">Metal-binding</keyword>
<keyword id="KW-0862">Zinc</keyword>
<comment type="function">
    <text evidence="1">Catalyzes the hydrolytic cleavage of the carbon-nitrogen bond in imidazolone-5-propanoate to yield N-formimidoyl-L-glutamate. It is the third step in the universal histidine degradation pathway.</text>
</comment>
<comment type="catalytic activity">
    <reaction evidence="1">
        <text>4-imidazolone-5-propanoate + H2O = N-formimidoyl-L-glutamate</text>
        <dbReference type="Rhea" id="RHEA:23660"/>
        <dbReference type="ChEBI" id="CHEBI:15377"/>
        <dbReference type="ChEBI" id="CHEBI:58928"/>
        <dbReference type="ChEBI" id="CHEBI:77893"/>
        <dbReference type="EC" id="3.5.2.7"/>
    </reaction>
</comment>
<comment type="cofactor">
    <cofactor evidence="1">
        <name>Zn(2+)</name>
        <dbReference type="ChEBI" id="CHEBI:29105"/>
    </cofactor>
    <cofactor evidence="1">
        <name>Fe(3+)</name>
        <dbReference type="ChEBI" id="CHEBI:29034"/>
    </cofactor>
    <text evidence="1">Binds 1 zinc or iron ion per subunit.</text>
</comment>
<comment type="pathway">
    <text evidence="1">Amino-acid degradation; L-histidine degradation into L-glutamate; N-formimidoyl-L-glutamate from L-histidine: step 3/3.</text>
</comment>
<comment type="subcellular location">
    <subcellularLocation>
        <location evidence="1">Cytoplasm</location>
    </subcellularLocation>
</comment>
<comment type="similarity">
    <text evidence="1">Belongs to the metallo-dependent hydrolases superfamily. HutI family.</text>
</comment>
<comment type="sequence caution" evidence="2">
    <conflict type="frameshift">
        <sequence resource="EMBL-CDS" id="AAB86968"/>
    </conflict>
</comment>
<protein>
    <recommendedName>
        <fullName evidence="1">Imidazolonepropionase</fullName>
        <ecNumber evidence="1">3.5.2.7</ecNumber>
    </recommendedName>
    <alternativeName>
        <fullName evidence="1">Imidazolone-5-propionate hydrolase</fullName>
    </alternativeName>
</protein>
<accession>O31200</accession>
<gene>
    <name evidence="1" type="primary">hutI</name>
</gene>
<proteinExistence type="inferred from homology"/>
<name>HUTI_PSEPU</name>
<evidence type="ECO:0000255" key="1">
    <source>
        <dbReference type="HAMAP-Rule" id="MF_00372"/>
    </source>
</evidence>
<evidence type="ECO:0000305" key="2"/>
<dbReference type="EC" id="3.5.2.7" evidence="1"/>
<dbReference type="EMBL" id="AF032970">
    <property type="protein sequence ID" value="AAB86968.1"/>
    <property type="status" value="ALT_FRAME"/>
    <property type="molecule type" value="Genomic_DNA"/>
</dbReference>
<dbReference type="RefSeq" id="WP_016502003.1">
    <property type="nucleotide sequence ID" value="NZ_UGUX01000003.1"/>
</dbReference>
<dbReference type="SMR" id="O31200"/>
<dbReference type="GeneID" id="45526574"/>
<dbReference type="eggNOG" id="COG1228">
    <property type="taxonomic scope" value="Bacteria"/>
</dbReference>
<dbReference type="BioCyc" id="MetaCyc:MONOMER-11617"/>
<dbReference type="UniPathway" id="UPA00379">
    <property type="reaction ID" value="UER00551"/>
</dbReference>
<dbReference type="GO" id="GO:0005737">
    <property type="term" value="C:cytoplasm"/>
    <property type="evidence" value="ECO:0007669"/>
    <property type="project" value="UniProtKB-SubCell"/>
</dbReference>
<dbReference type="GO" id="GO:0050480">
    <property type="term" value="F:imidazolonepropionase activity"/>
    <property type="evidence" value="ECO:0007669"/>
    <property type="project" value="UniProtKB-UniRule"/>
</dbReference>
<dbReference type="GO" id="GO:0005506">
    <property type="term" value="F:iron ion binding"/>
    <property type="evidence" value="ECO:0007669"/>
    <property type="project" value="UniProtKB-UniRule"/>
</dbReference>
<dbReference type="GO" id="GO:0008270">
    <property type="term" value="F:zinc ion binding"/>
    <property type="evidence" value="ECO:0007669"/>
    <property type="project" value="UniProtKB-UniRule"/>
</dbReference>
<dbReference type="GO" id="GO:0019556">
    <property type="term" value="P:L-histidine catabolic process to glutamate and formamide"/>
    <property type="evidence" value="ECO:0007669"/>
    <property type="project" value="UniProtKB-UniPathway"/>
</dbReference>
<dbReference type="GO" id="GO:0019557">
    <property type="term" value="P:L-histidine catabolic process to glutamate and formate"/>
    <property type="evidence" value="ECO:0007669"/>
    <property type="project" value="UniProtKB-UniPathway"/>
</dbReference>
<dbReference type="CDD" id="cd01296">
    <property type="entry name" value="Imidazolone-5PH"/>
    <property type="match status" value="1"/>
</dbReference>
<dbReference type="FunFam" id="3.20.20.140:FF:000007">
    <property type="entry name" value="Imidazolonepropionase"/>
    <property type="match status" value="1"/>
</dbReference>
<dbReference type="Gene3D" id="3.20.20.140">
    <property type="entry name" value="Metal-dependent hydrolases"/>
    <property type="match status" value="1"/>
</dbReference>
<dbReference type="Gene3D" id="2.30.40.10">
    <property type="entry name" value="Urease, subunit C, domain 1"/>
    <property type="match status" value="1"/>
</dbReference>
<dbReference type="HAMAP" id="MF_00372">
    <property type="entry name" value="HutI"/>
    <property type="match status" value="1"/>
</dbReference>
<dbReference type="InterPro" id="IPR006680">
    <property type="entry name" value="Amidohydro-rel"/>
</dbReference>
<dbReference type="InterPro" id="IPR005920">
    <property type="entry name" value="HutI"/>
</dbReference>
<dbReference type="InterPro" id="IPR011059">
    <property type="entry name" value="Metal-dep_hydrolase_composite"/>
</dbReference>
<dbReference type="InterPro" id="IPR032466">
    <property type="entry name" value="Metal_Hydrolase"/>
</dbReference>
<dbReference type="NCBIfam" id="TIGR01224">
    <property type="entry name" value="hutI"/>
    <property type="match status" value="1"/>
</dbReference>
<dbReference type="PANTHER" id="PTHR42752">
    <property type="entry name" value="IMIDAZOLONEPROPIONASE"/>
    <property type="match status" value="1"/>
</dbReference>
<dbReference type="PANTHER" id="PTHR42752:SF1">
    <property type="entry name" value="IMIDAZOLONEPROPIONASE-RELATED"/>
    <property type="match status" value="1"/>
</dbReference>
<dbReference type="Pfam" id="PF01979">
    <property type="entry name" value="Amidohydro_1"/>
    <property type="match status" value="1"/>
</dbReference>
<dbReference type="SUPFAM" id="SSF51338">
    <property type="entry name" value="Composite domain of metallo-dependent hydrolases"/>
    <property type="match status" value="1"/>
</dbReference>
<dbReference type="SUPFAM" id="SSF51556">
    <property type="entry name" value="Metallo-dependent hydrolases"/>
    <property type="match status" value="1"/>
</dbReference>